<proteinExistence type="inferred from homology"/>
<gene>
    <name evidence="1" type="primary">rpsR</name>
    <name type="ordered locus">LBL_1247</name>
</gene>
<comment type="function">
    <text evidence="1">Binds as a heterodimer with protein bS6 to the central domain of the 16S rRNA, where it helps stabilize the platform of the 30S subunit.</text>
</comment>
<comment type="subunit">
    <text evidence="1">Part of the 30S ribosomal subunit. Forms a tight heterodimer with protein bS6.</text>
</comment>
<comment type="similarity">
    <text evidence="1">Belongs to the bacterial ribosomal protein bS18 family.</text>
</comment>
<feature type="chain" id="PRO_1000003528" description="Small ribosomal subunit protein bS18">
    <location>
        <begin position="1"/>
        <end position="81"/>
    </location>
</feature>
<organism>
    <name type="scientific">Leptospira borgpetersenii serovar Hardjo-bovis (strain L550)</name>
    <dbReference type="NCBI Taxonomy" id="355276"/>
    <lineage>
        <taxon>Bacteria</taxon>
        <taxon>Pseudomonadati</taxon>
        <taxon>Spirochaetota</taxon>
        <taxon>Spirochaetia</taxon>
        <taxon>Leptospirales</taxon>
        <taxon>Leptospiraceae</taxon>
        <taxon>Leptospira</taxon>
    </lineage>
</organism>
<evidence type="ECO:0000255" key="1">
    <source>
        <dbReference type="HAMAP-Rule" id="MF_00270"/>
    </source>
</evidence>
<evidence type="ECO:0000305" key="2"/>
<reference key="1">
    <citation type="journal article" date="2006" name="Proc. Natl. Acad. Sci. U.S.A.">
        <title>Genome reduction in Leptospira borgpetersenii reflects limited transmission potential.</title>
        <authorList>
            <person name="Bulach D.M."/>
            <person name="Zuerner R.L."/>
            <person name="Wilson P."/>
            <person name="Seemann T."/>
            <person name="McGrath A."/>
            <person name="Cullen P.A."/>
            <person name="Davis J."/>
            <person name="Johnson M."/>
            <person name="Kuczek E."/>
            <person name="Alt D.P."/>
            <person name="Peterson-Burch B."/>
            <person name="Coppel R.L."/>
            <person name="Rood J.I."/>
            <person name="Davies J.K."/>
            <person name="Adler B."/>
        </authorList>
    </citation>
    <scope>NUCLEOTIDE SEQUENCE [LARGE SCALE GENOMIC DNA]</scope>
    <source>
        <strain>L550</strain>
    </source>
</reference>
<keyword id="KW-0687">Ribonucleoprotein</keyword>
<keyword id="KW-0689">Ribosomal protein</keyword>
<keyword id="KW-0694">RNA-binding</keyword>
<keyword id="KW-0699">rRNA-binding</keyword>
<name>RS18_LEPBL</name>
<protein>
    <recommendedName>
        <fullName evidence="1">Small ribosomal subunit protein bS18</fullName>
    </recommendedName>
    <alternativeName>
        <fullName evidence="2">30S ribosomal protein S18</fullName>
    </alternativeName>
</protein>
<sequence length="81" mass="9603">MEGKPQRKQNKYKKKVCRFTADPELAKQINYKNIELLERFITNRGKIIPRRITGTSARYQRVLAREIRKARSIGLLPYKVN</sequence>
<accession>Q052K0</accession>
<dbReference type="EMBL" id="CP000348">
    <property type="protein sequence ID" value="ABJ78745.1"/>
    <property type="molecule type" value="Genomic_DNA"/>
</dbReference>
<dbReference type="SMR" id="Q052K0"/>
<dbReference type="KEGG" id="lbl:LBL_1247"/>
<dbReference type="HOGENOM" id="CLU_148710_2_2_12"/>
<dbReference type="GO" id="GO:0022627">
    <property type="term" value="C:cytosolic small ribosomal subunit"/>
    <property type="evidence" value="ECO:0007669"/>
    <property type="project" value="TreeGrafter"/>
</dbReference>
<dbReference type="GO" id="GO:0070181">
    <property type="term" value="F:small ribosomal subunit rRNA binding"/>
    <property type="evidence" value="ECO:0007669"/>
    <property type="project" value="TreeGrafter"/>
</dbReference>
<dbReference type="GO" id="GO:0003735">
    <property type="term" value="F:structural constituent of ribosome"/>
    <property type="evidence" value="ECO:0007669"/>
    <property type="project" value="InterPro"/>
</dbReference>
<dbReference type="GO" id="GO:0006412">
    <property type="term" value="P:translation"/>
    <property type="evidence" value="ECO:0007669"/>
    <property type="project" value="UniProtKB-UniRule"/>
</dbReference>
<dbReference type="FunFam" id="4.10.640.10:FF:000014">
    <property type="entry name" value="30S ribosomal protein S18"/>
    <property type="match status" value="1"/>
</dbReference>
<dbReference type="Gene3D" id="4.10.640.10">
    <property type="entry name" value="Ribosomal protein S18"/>
    <property type="match status" value="1"/>
</dbReference>
<dbReference type="HAMAP" id="MF_00270">
    <property type="entry name" value="Ribosomal_bS18"/>
    <property type="match status" value="1"/>
</dbReference>
<dbReference type="InterPro" id="IPR001648">
    <property type="entry name" value="Ribosomal_bS18"/>
</dbReference>
<dbReference type="InterPro" id="IPR018275">
    <property type="entry name" value="Ribosomal_bS18_CS"/>
</dbReference>
<dbReference type="InterPro" id="IPR036870">
    <property type="entry name" value="Ribosomal_bS18_sf"/>
</dbReference>
<dbReference type="NCBIfam" id="TIGR00165">
    <property type="entry name" value="S18"/>
    <property type="match status" value="1"/>
</dbReference>
<dbReference type="PANTHER" id="PTHR13479">
    <property type="entry name" value="30S RIBOSOMAL PROTEIN S18"/>
    <property type="match status" value="1"/>
</dbReference>
<dbReference type="PANTHER" id="PTHR13479:SF40">
    <property type="entry name" value="SMALL RIBOSOMAL SUBUNIT PROTEIN BS18M"/>
    <property type="match status" value="1"/>
</dbReference>
<dbReference type="Pfam" id="PF01084">
    <property type="entry name" value="Ribosomal_S18"/>
    <property type="match status" value="1"/>
</dbReference>
<dbReference type="PRINTS" id="PR00974">
    <property type="entry name" value="RIBOSOMALS18"/>
</dbReference>
<dbReference type="SUPFAM" id="SSF46911">
    <property type="entry name" value="Ribosomal protein S18"/>
    <property type="match status" value="1"/>
</dbReference>
<dbReference type="PROSITE" id="PS00057">
    <property type="entry name" value="RIBOSOMAL_S18"/>
    <property type="match status" value="1"/>
</dbReference>